<comment type="function">
    <text evidence="2">A translation factor that gates the progression of the 70S ribosomal initiation complex (IC, containing tRNA(fMet) in the P-site) into the translation elongation cycle by using a mechanism sensitive to the ATP/ADP ratio. Binds to the 70S ribosome E-site where it modulates the state of the translating ribosome during subunit translocation. ATP hydrolysis probably frees it from the ribosome, which can enter the elongation phase.</text>
</comment>
<comment type="catalytic activity">
    <reaction evidence="2">
        <text>ATP + H2O = ADP + phosphate + H(+)</text>
        <dbReference type="Rhea" id="RHEA:13065"/>
        <dbReference type="ChEBI" id="CHEBI:15377"/>
        <dbReference type="ChEBI" id="CHEBI:15378"/>
        <dbReference type="ChEBI" id="CHEBI:30616"/>
        <dbReference type="ChEBI" id="CHEBI:43474"/>
        <dbReference type="ChEBI" id="CHEBI:456216"/>
    </reaction>
</comment>
<comment type="subunit">
    <text evidence="2">Monomer. Probably contacts ribosomal proteins L1, L5, L33 and S7, the 16S and 23S rRNA and the P-site containing tRNA(fMet).</text>
</comment>
<comment type="subcellular location">
    <subcellularLocation>
        <location evidence="2">Cytoplasm</location>
    </subcellularLocation>
    <text evidence="2">Associates with ribosomes and polysomes.</text>
</comment>
<comment type="domain">
    <text evidence="2">The arm domain is inserted in the first ABC transporter domain. Probably contacts ribosomal protein L1.</text>
</comment>
<comment type="domain">
    <text evidence="2">The P-site tRNA interaction motif (PtIM domain) probably interacts with the P-site tRNA(fMet) as well as the 23S rRNA.</text>
</comment>
<comment type="similarity">
    <text evidence="2 3">Belongs to the ABC transporter superfamily. ABCF family. Translational throttle EttA subfamily.</text>
</comment>
<proteinExistence type="inferred from homology"/>
<keyword id="KW-0067">ATP-binding</keyword>
<keyword id="KW-0963">Cytoplasm</keyword>
<keyword id="KW-0378">Hydrolase</keyword>
<keyword id="KW-0547">Nucleotide-binding</keyword>
<keyword id="KW-0648">Protein biosynthesis</keyword>
<keyword id="KW-1185">Reference proteome</keyword>
<keyword id="KW-0677">Repeat</keyword>
<keyword id="KW-0694">RNA-binding</keyword>
<keyword id="KW-0699">rRNA-binding</keyword>
<keyword id="KW-0810">Translation regulation</keyword>
<keyword id="KW-0820">tRNA-binding</keyword>
<accession>P0A9W5</accession>
<accession>P37797</accession>
<gene>
    <name evidence="2" type="primary">ettA</name>
    <name type="ordered locus">SF4423</name>
    <name type="ordered locus">S4694</name>
</gene>
<dbReference type="EC" id="3.6.1.-" evidence="2"/>
<dbReference type="EMBL" id="AE005674">
    <property type="protein sequence ID" value="AAN45837.1"/>
    <property type="molecule type" value="Genomic_DNA"/>
</dbReference>
<dbReference type="EMBL" id="AE014073">
    <property type="protein sequence ID" value="AAP19611.1"/>
    <property type="molecule type" value="Genomic_DNA"/>
</dbReference>
<dbReference type="RefSeq" id="WP_000046749.1">
    <property type="nucleotide sequence ID" value="NZ_WACK01000001.1"/>
</dbReference>
<dbReference type="SMR" id="P0A9W5"/>
<dbReference type="STRING" id="198214.SF4423"/>
<dbReference type="PaxDb" id="198214-SF4423"/>
<dbReference type="GeneID" id="93777454"/>
<dbReference type="KEGG" id="sfl:SF4423"/>
<dbReference type="KEGG" id="sfx:S4694"/>
<dbReference type="PATRIC" id="fig|198214.7.peg.5213"/>
<dbReference type="HOGENOM" id="CLU_000604_36_0_6"/>
<dbReference type="Proteomes" id="UP000001006">
    <property type="component" value="Chromosome"/>
</dbReference>
<dbReference type="Proteomes" id="UP000002673">
    <property type="component" value="Chromosome"/>
</dbReference>
<dbReference type="GO" id="GO:0005737">
    <property type="term" value="C:cytoplasm"/>
    <property type="evidence" value="ECO:0007669"/>
    <property type="project" value="UniProtKB-SubCell"/>
</dbReference>
<dbReference type="GO" id="GO:0005524">
    <property type="term" value="F:ATP binding"/>
    <property type="evidence" value="ECO:0007669"/>
    <property type="project" value="UniProtKB-UniRule"/>
</dbReference>
<dbReference type="GO" id="GO:0016887">
    <property type="term" value="F:ATP hydrolysis activity"/>
    <property type="evidence" value="ECO:0007669"/>
    <property type="project" value="UniProtKB-UniRule"/>
</dbReference>
<dbReference type="GO" id="GO:0043022">
    <property type="term" value="F:ribosome binding"/>
    <property type="evidence" value="ECO:0007669"/>
    <property type="project" value="UniProtKB-UniRule"/>
</dbReference>
<dbReference type="GO" id="GO:0019843">
    <property type="term" value="F:rRNA binding"/>
    <property type="evidence" value="ECO:0007669"/>
    <property type="project" value="UniProtKB-UniRule"/>
</dbReference>
<dbReference type="GO" id="GO:0000049">
    <property type="term" value="F:tRNA binding"/>
    <property type="evidence" value="ECO:0007669"/>
    <property type="project" value="UniProtKB-UniRule"/>
</dbReference>
<dbReference type="GO" id="GO:0045900">
    <property type="term" value="P:negative regulation of translational elongation"/>
    <property type="evidence" value="ECO:0007669"/>
    <property type="project" value="UniProtKB-UniRule"/>
</dbReference>
<dbReference type="GO" id="GO:0006412">
    <property type="term" value="P:translation"/>
    <property type="evidence" value="ECO:0007669"/>
    <property type="project" value="UniProtKB-KW"/>
</dbReference>
<dbReference type="CDD" id="cd03221">
    <property type="entry name" value="ABCF_EF-3"/>
    <property type="match status" value="2"/>
</dbReference>
<dbReference type="FunFam" id="3.40.50.300:FF:000183">
    <property type="entry name" value="ABC transporter ATP-binding protein yjjK"/>
    <property type="match status" value="1"/>
</dbReference>
<dbReference type="FunFam" id="3.40.50.300:FF:000011">
    <property type="entry name" value="Putative ABC transporter ATP-binding component"/>
    <property type="match status" value="1"/>
</dbReference>
<dbReference type="Gene3D" id="3.40.50.300">
    <property type="entry name" value="P-loop containing nucleotide triphosphate hydrolases"/>
    <property type="match status" value="2"/>
</dbReference>
<dbReference type="HAMAP" id="MF_00847">
    <property type="entry name" value="EttA"/>
    <property type="match status" value="1"/>
</dbReference>
<dbReference type="InterPro" id="IPR003593">
    <property type="entry name" value="AAA+_ATPase"/>
</dbReference>
<dbReference type="InterPro" id="IPR032781">
    <property type="entry name" value="ABC_tran_Xtn"/>
</dbReference>
<dbReference type="InterPro" id="IPR003439">
    <property type="entry name" value="ABC_transporter-like_ATP-bd"/>
</dbReference>
<dbReference type="InterPro" id="IPR017871">
    <property type="entry name" value="ABC_transporter-like_CS"/>
</dbReference>
<dbReference type="InterPro" id="IPR022374">
    <property type="entry name" value="EttA"/>
</dbReference>
<dbReference type="InterPro" id="IPR027417">
    <property type="entry name" value="P-loop_NTPase"/>
</dbReference>
<dbReference type="NCBIfam" id="TIGR03719">
    <property type="entry name" value="ABC_ABC_ChvD"/>
    <property type="match status" value="1"/>
</dbReference>
<dbReference type="NCBIfam" id="NF008775">
    <property type="entry name" value="PRK11819.1"/>
    <property type="match status" value="1"/>
</dbReference>
<dbReference type="PANTHER" id="PTHR43858:SF1">
    <property type="entry name" value="ABC TRANSPORTER-RELATED PROTEIN"/>
    <property type="match status" value="1"/>
</dbReference>
<dbReference type="PANTHER" id="PTHR43858">
    <property type="entry name" value="ENERGY-DEPENDENT TRANSLATIONAL THROTTLE PROTEIN ETTA"/>
    <property type="match status" value="1"/>
</dbReference>
<dbReference type="Pfam" id="PF00005">
    <property type="entry name" value="ABC_tran"/>
    <property type="match status" value="2"/>
</dbReference>
<dbReference type="Pfam" id="PF12848">
    <property type="entry name" value="ABC_tran_Xtn"/>
    <property type="match status" value="1"/>
</dbReference>
<dbReference type="SMART" id="SM00382">
    <property type="entry name" value="AAA"/>
    <property type="match status" value="2"/>
</dbReference>
<dbReference type="SUPFAM" id="SSF52540">
    <property type="entry name" value="P-loop containing nucleoside triphosphate hydrolases"/>
    <property type="match status" value="2"/>
</dbReference>
<dbReference type="PROSITE" id="PS00211">
    <property type="entry name" value="ABC_TRANSPORTER_1"/>
    <property type="match status" value="1"/>
</dbReference>
<dbReference type="PROSITE" id="PS50893">
    <property type="entry name" value="ABC_TRANSPORTER_2"/>
    <property type="match status" value="2"/>
</dbReference>
<name>ETTA_SHIFL</name>
<reference key="1">
    <citation type="journal article" date="2002" name="Nucleic Acids Res.">
        <title>Genome sequence of Shigella flexneri 2a: insights into pathogenicity through comparison with genomes of Escherichia coli K12 and O157.</title>
        <authorList>
            <person name="Jin Q."/>
            <person name="Yuan Z."/>
            <person name="Xu J."/>
            <person name="Wang Y."/>
            <person name="Shen Y."/>
            <person name="Lu W."/>
            <person name="Wang J."/>
            <person name="Liu H."/>
            <person name="Yang J."/>
            <person name="Yang F."/>
            <person name="Zhang X."/>
            <person name="Zhang J."/>
            <person name="Yang G."/>
            <person name="Wu H."/>
            <person name="Qu D."/>
            <person name="Dong J."/>
            <person name="Sun L."/>
            <person name="Xue Y."/>
            <person name="Zhao A."/>
            <person name="Gao Y."/>
            <person name="Zhu J."/>
            <person name="Kan B."/>
            <person name="Ding K."/>
            <person name="Chen S."/>
            <person name="Cheng H."/>
            <person name="Yao Z."/>
            <person name="He B."/>
            <person name="Chen R."/>
            <person name="Ma D."/>
            <person name="Qiang B."/>
            <person name="Wen Y."/>
            <person name="Hou Y."/>
            <person name="Yu J."/>
        </authorList>
    </citation>
    <scope>NUCLEOTIDE SEQUENCE [LARGE SCALE GENOMIC DNA]</scope>
    <source>
        <strain>301 / Serotype 2a</strain>
    </source>
</reference>
<reference key="2">
    <citation type="journal article" date="2003" name="Infect. Immun.">
        <title>Complete genome sequence and comparative genomics of Shigella flexneri serotype 2a strain 2457T.</title>
        <authorList>
            <person name="Wei J."/>
            <person name="Goldberg M.B."/>
            <person name="Burland V."/>
            <person name="Venkatesan M.M."/>
            <person name="Deng W."/>
            <person name="Fournier G."/>
            <person name="Mayhew G.F."/>
            <person name="Plunkett G. III"/>
            <person name="Rose D.J."/>
            <person name="Darling A."/>
            <person name="Mau B."/>
            <person name="Perna N.T."/>
            <person name="Payne S.M."/>
            <person name="Runyen-Janecky L.J."/>
            <person name="Zhou S."/>
            <person name="Schwartz D.C."/>
            <person name="Blattner F.R."/>
        </authorList>
    </citation>
    <scope>NUCLEOTIDE SEQUENCE [LARGE SCALE GENOMIC DNA]</scope>
    <source>
        <strain>ATCC 700930 / 2457T / Serotype 2a</strain>
    </source>
</reference>
<feature type="initiator methionine" description="Removed" evidence="1">
    <location>
        <position position="1"/>
    </location>
</feature>
<feature type="chain" id="PRO_0000093193" description="Energy-dependent translational throttle protein EttA">
    <location>
        <begin position="2"/>
        <end position="555"/>
    </location>
</feature>
<feature type="domain" description="ABC transporter 1" evidence="2">
    <location>
        <begin position="6"/>
        <end position="259"/>
    </location>
</feature>
<feature type="domain" description="ABC transporter 2" evidence="2">
    <location>
        <begin position="324"/>
        <end position="550"/>
    </location>
</feature>
<feature type="region of interest" description="Arm" evidence="2">
    <location>
        <begin position="95"/>
        <end position="139"/>
    </location>
</feature>
<feature type="region of interest" description="PtIM" evidence="2">
    <location>
        <begin position="242"/>
        <end position="322"/>
    </location>
</feature>
<feature type="binding site" evidence="2">
    <location>
        <begin position="39"/>
        <end position="46"/>
    </location>
    <ligand>
        <name>ATP</name>
        <dbReference type="ChEBI" id="CHEBI:30616"/>
        <label>1</label>
    </ligand>
</feature>
<feature type="binding site" evidence="2">
    <location>
        <begin position="356"/>
        <end position="363"/>
    </location>
    <ligand>
        <name>ATP</name>
        <dbReference type="ChEBI" id="CHEBI:30616"/>
        <label>2</label>
    </ligand>
</feature>
<organism>
    <name type="scientific">Shigella flexneri</name>
    <dbReference type="NCBI Taxonomy" id="623"/>
    <lineage>
        <taxon>Bacteria</taxon>
        <taxon>Pseudomonadati</taxon>
        <taxon>Pseudomonadota</taxon>
        <taxon>Gammaproteobacteria</taxon>
        <taxon>Enterobacterales</taxon>
        <taxon>Enterobacteriaceae</taxon>
        <taxon>Shigella</taxon>
    </lineage>
</organism>
<protein>
    <recommendedName>
        <fullName evidence="2">Energy-dependent translational throttle protein EttA</fullName>
        <ecNumber evidence="2">3.6.1.-</ecNumber>
    </recommendedName>
    <alternativeName>
        <fullName evidence="2">Translational regulatory factor EttA</fullName>
    </alternativeName>
</protein>
<evidence type="ECO:0000250" key="1"/>
<evidence type="ECO:0000255" key="2">
    <source>
        <dbReference type="HAMAP-Rule" id="MF_00847"/>
    </source>
</evidence>
<evidence type="ECO:0000305" key="3"/>
<sequence length="555" mass="62443">MAQFVYTMHRVGKVVPPKRHILKNISLSFFPGAKIGVLGLNGAGKSTLLRIMAGIDKDIEGEARPQPDIKIGYLPQEPQLNPEHTVRESIEEAVSEVVNALKRLDEVYALYADPDADFDKLAAEQGRLEEIIQAHDGHNLNVQLERAADALRLPDWDAKIANLSGGERRRVALCRLLLEKPDMLLLDEPTNHLDAESVAWLERFLHDFEGTVVAITHDRYFLDNVAGWILELDRGEGIPWEGNYSSWLEQKDQRLAQEASQEAARRKSIEKELEWVRQGTKGRQSKGKARLARFEELNSTEYQKRNETNELFIPPGPRLGDKVLEVSNLRKSYGDRLLIDDLSFSIPKGAIVGIIGPNGAGKSTLFRMISGQEQPDSGTITLGETVKLASVDQFRDSMDNSKTVWEEVSGGLDIMKIGNTEMPSRAYVGRFNFKGVDQGKRVGELSGGERGRLHLAKLLQVGGNMLLLDEPTNDLDIETLRALENALLEFPGCAMVISHDRWFLDRIATHILDYQDEGKVEFFEGNFTEYEEYKKRTLGADALEPKRIKYKRIAK</sequence>